<keyword id="KW-0044">Antibiotic</keyword>
<keyword id="KW-0929">Antimicrobial</keyword>
<keyword id="KW-0165">Cleavage on pair of basic residues</keyword>
<keyword id="KW-0211">Defensin</keyword>
<keyword id="KW-1015">Disulfide bond</keyword>
<keyword id="KW-1185">Reference proteome</keyword>
<keyword id="KW-0964">Secreted</keyword>
<keyword id="KW-0732">Signal</keyword>
<name>DEFB5_ORNAN</name>
<feature type="signal peptide" evidence="2">
    <location>
        <begin position="1"/>
        <end position="20"/>
    </location>
</feature>
<feature type="propeptide" id="PRO_0000352726" evidence="2">
    <location>
        <begin position="21"/>
        <end position="70"/>
    </location>
</feature>
<feature type="peptide" id="PRO_0000352727" description="Defensin-B5">
    <location>
        <begin position="71"/>
        <end position="102"/>
    </location>
</feature>
<feature type="propeptide" id="PRO_0000352728" evidence="2">
    <location>
        <begin position="107"/>
        <end position="109"/>
    </location>
</feature>
<feature type="region of interest" description="Disordered" evidence="3">
    <location>
        <begin position="21"/>
        <end position="44"/>
    </location>
</feature>
<feature type="compositionally biased region" description="Basic and acidic residues" evidence="3">
    <location>
        <begin position="34"/>
        <end position="44"/>
    </location>
</feature>
<feature type="disulfide bond" evidence="1">
    <location>
        <begin position="73"/>
        <end position="101"/>
    </location>
</feature>
<feature type="disulfide bond" evidence="1">
    <location>
        <begin position="80"/>
        <end position="95"/>
    </location>
</feature>
<feature type="disulfide bond" evidence="1">
    <location>
        <begin position="85"/>
        <end position="102"/>
    </location>
</feature>
<reference key="1">
    <citation type="journal article" date="2008" name="Genome Res.">
        <title>Defensins and the convergent evolution of platypus and reptile venom genes.</title>
        <authorList>
            <person name="Whittington C.M."/>
            <person name="Papenfuss A.T."/>
            <person name="Bansal P."/>
            <person name="Torres A.M."/>
            <person name="Wong E.S."/>
            <person name="Deakin J.E."/>
            <person name="Graves T."/>
            <person name="Alsop A."/>
            <person name="Schatzkamer K."/>
            <person name="Kremitzki C."/>
            <person name="Ponting C.P."/>
            <person name="Temple-Smith P."/>
            <person name="Warren W.C."/>
            <person name="Kuchel P.W."/>
            <person name="Belov K."/>
        </authorList>
    </citation>
    <scope>NUCLEOTIDE SEQUENCE [MRNA]</scope>
</reference>
<reference key="2">
    <citation type="journal article" date="2008" name="Toxicon">
        <title>Expression patterns of platypus defensin and related venom genes across a range of tissue types reveal the possibility of broader functions for OvDLPs than previously suspected.</title>
        <authorList>
            <person name="Whittington C.M."/>
            <person name="Papenfuss A.T."/>
            <person name="Kuchel P.W."/>
            <person name="Belov K."/>
        </authorList>
    </citation>
    <scope>TISSUE SPECIFICITY</scope>
</reference>
<protein>
    <recommendedName>
        <fullName evidence="8 9">Defensin-B5</fullName>
        <shortName evidence="5">DefB5</shortName>
        <shortName evidence="6">OaDefB5</shortName>
    </recommendedName>
</protein>
<comment type="function">
    <text evidence="1">Has antimicrobial activity.</text>
</comment>
<comment type="subcellular location">
    <subcellularLocation>
        <location evidence="1">Secreted</location>
    </subcellularLocation>
</comment>
<comment type="tissue specificity">
    <text evidence="4">Highly expressed in kidney, and expressed at lower levels in testis.</text>
</comment>
<comment type="similarity">
    <text evidence="7">Belongs to the beta-defensin family.</text>
</comment>
<comment type="online information" name="Platypus resources">
    <link uri="https://www.twinkl.ch/search?q=platypus"/>
</comment>
<evidence type="ECO:0000250" key="1"/>
<evidence type="ECO:0000255" key="2"/>
<evidence type="ECO:0000256" key="3">
    <source>
        <dbReference type="SAM" id="MobiDB-lite"/>
    </source>
</evidence>
<evidence type="ECO:0000269" key="4">
    <source>
    </source>
</evidence>
<evidence type="ECO:0000303" key="5">
    <source>
    </source>
</evidence>
<evidence type="ECO:0000303" key="6">
    <source>
    </source>
</evidence>
<evidence type="ECO:0000305" key="7"/>
<evidence type="ECO:0000305" key="8">
    <source>
    </source>
</evidence>
<evidence type="ECO:0000305" key="9">
    <source>
    </source>
</evidence>
<accession>P0C8A9</accession>
<sequence>MRGLLPFLFLLSFFLSPIQAQPEGREEELEETWSEDRDQAPPRVVEESEVVGAENEAGLAAGRSYPWIILKKCRERGGQCHSGVCSWNEKFIGFCSFARPCCRKRRAVP</sequence>
<organism>
    <name type="scientific">Ornithorhynchus anatinus</name>
    <name type="common">Duckbill platypus</name>
    <dbReference type="NCBI Taxonomy" id="9258"/>
    <lineage>
        <taxon>Eukaryota</taxon>
        <taxon>Metazoa</taxon>
        <taxon>Chordata</taxon>
        <taxon>Craniata</taxon>
        <taxon>Vertebrata</taxon>
        <taxon>Euteleostomi</taxon>
        <taxon>Mammalia</taxon>
        <taxon>Monotremata</taxon>
        <taxon>Ornithorhynchidae</taxon>
        <taxon>Ornithorhynchus</taxon>
    </lineage>
</organism>
<proteinExistence type="evidence at transcript level"/>
<dbReference type="SMR" id="P0C8A9"/>
<dbReference type="InParanoid" id="P0C8A9"/>
<dbReference type="Proteomes" id="UP000002279">
    <property type="component" value="Unplaced"/>
</dbReference>
<dbReference type="GO" id="GO:0005576">
    <property type="term" value="C:extracellular region"/>
    <property type="evidence" value="ECO:0007669"/>
    <property type="project" value="UniProtKB-SubCell"/>
</dbReference>
<dbReference type="GO" id="GO:0042742">
    <property type="term" value="P:defense response to bacterium"/>
    <property type="evidence" value="ECO:0007669"/>
    <property type="project" value="UniProtKB-KW"/>
</dbReference>
<dbReference type="InterPro" id="IPR001855">
    <property type="entry name" value="Defensin_beta-like"/>
</dbReference>
<dbReference type="Pfam" id="PF00711">
    <property type="entry name" value="Defensin_beta"/>
    <property type="match status" value="1"/>
</dbReference>
<dbReference type="SUPFAM" id="SSF57392">
    <property type="entry name" value="Defensin-like"/>
    <property type="match status" value="1"/>
</dbReference>